<keyword id="KW-0378">Hydrolase</keyword>
<keyword id="KW-0479">Metal-binding</keyword>
<keyword id="KW-1185">Reference proteome</keyword>
<gene>
    <name type="primary">yhaO</name>
    <name type="ordered locus">BSU09910</name>
</gene>
<comment type="cofactor">
    <cofactor evidence="1">
        <name>a divalent metal cation</name>
        <dbReference type="ChEBI" id="CHEBI:60240"/>
    </cofactor>
    <text evidence="1">Binds 2 divalent metal cations.</text>
</comment>
<comment type="induction">
    <text evidence="2">By mitomycin C and UV irradiation which requires RecA; probably a member of the yhaONM operon.</text>
</comment>
<comment type="similarity">
    <text evidence="3">Belongs to the metallophosphoesterase superfamily.</text>
</comment>
<name>YHAO_BACSU</name>
<reference key="1">
    <citation type="journal article" date="1998" name="Microbiology">
        <title>The 172 kb prkA-addAB region from 83 degrees to 97 degrees of the Bacillus subtilis chromosome contains several dysfunctional genes, the glyB marker, many genes encoding transporter proteins, and the ubiquitous hit gene.</title>
        <authorList>
            <person name="Noback M.A."/>
            <person name="Holsappel S."/>
            <person name="Kiewiet R."/>
            <person name="Terpstra P."/>
            <person name="Wambutt R."/>
            <person name="Wedler H."/>
            <person name="Venema G."/>
            <person name="Bron S."/>
        </authorList>
    </citation>
    <scope>NUCLEOTIDE SEQUENCE [GENOMIC DNA]</scope>
    <source>
        <strain>168</strain>
    </source>
</reference>
<reference key="2">
    <citation type="journal article" date="1997" name="Nature">
        <title>The complete genome sequence of the Gram-positive bacterium Bacillus subtilis.</title>
        <authorList>
            <person name="Kunst F."/>
            <person name="Ogasawara N."/>
            <person name="Moszer I."/>
            <person name="Albertini A.M."/>
            <person name="Alloni G."/>
            <person name="Azevedo V."/>
            <person name="Bertero M.G."/>
            <person name="Bessieres P."/>
            <person name="Bolotin A."/>
            <person name="Borchert S."/>
            <person name="Borriss R."/>
            <person name="Boursier L."/>
            <person name="Brans A."/>
            <person name="Braun M."/>
            <person name="Brignell S.C."/>
            <person name="Bron S."/>
            <person name="Brouillet S."/>
            <person name="Bruschi C.V."/>
            <person name="Caldwell B."/>
            <person name="Capuano V."/>
            <person name="Carter N.M."/>
            <person name="Choi S.-K."/>
            <person name="Codani J.-J."/>
            <person name="Connerton I.F."/>
            <person name="Cummings N.J."/>
            <person name="Daniel R.A."/>
            <person name="Denizot F."/>
            <person name="Devine K.M."/>
            <person name="Duesterhoeft A."/>
            <person name="Ehrlich S.D."/>
            <person name="Emmerson P.T."/>
            <person name="Entian K.-D."/>
            <person name="Errington J."/>
            <person name="Fabret C."/>
            <person name="Ferrari E."/>
            <person name="Foulger D."/>
            <person name="Fritz C."/>
            <person name="Fujita M."/>
            <person name="Fujita Y."/>
            <person name="Fuma S."/>
            <person name="Galizzi A."/>
            <person name="Galleron N."/>
            <person name="Ghim S.-Y."/>
            <person name="Glaser P."/>
            <person name="Goffeau A."/>
            <person name="Golightly E.J."/>
            <person name="Grandi G."/>
            <person name="Guiseppi G."/>
            <person name="Guy B.J."/>
            <person name="Haga K."/>
            <person name="Haiech J."/>
            <person name="Harwood C.R."/>
            <person name="Henaut A."/>
            <person name="Hilbert H."/>
            <person name="Holsappel S."/>
            <person name="Hosono S."/>
            <person name="Hullo M.-F."/>
            <person name="Itaya M."/>
            <person name="Jones L.-M."/>
            <person name="Joris B."/>
            <person name="Karamata D."/>
            <person name="Kasahara Y."/>
            <person name="Klaerr-Blanchard M."/>
            <person name="Klein C."/>
            <person name="Kobayashi Y."/>
            <person name="Koetter P."/>
            <person name="Koningstein G."/>
            <person name="Krogh S."/>
            <person name="Kumano M."/>
            <person name="Kurita K."/>
            <person name="Lapidus A."/>
            <person name="Lardinois S."/>
            <person name="Lauber J."/>
            <person name="Lazarevic V."/>
            <person name="Lee S.-M."/>
            <person name="Levine A."/>
            <person name="Liu H."/>
            <person name="Masuda S."/>
            <person name="Mauel C."/>
            <person name="Medigue C."/>
            <person name="Medina N."/>
            <person name="Mellado R.P."/>
            <person name="Mizuno M."/>
            <person name="Moestl D."/>
            <person name="Nakai S."/>
            <person name="Noback M."/>
            <person name="Noone D."/>
            <person name="O'Reilly M."/>
            <person name="Ogawa K."/>
            <person name="Ogiwara A."/>
            <person name="Oudega B."/>
            <person name="Park S.-H."/>
            <person name="Parro V."/>
            <person name="Pohl T.M."/>
            <person name="Portetelle D."/>
            <person name="Porwollik S."/>
            <person name="Prescott A.M."/>
            <person name="Presecan E."/>
            <person name="Pujic P."/>
            <person name="Purnelle B."/>
            <person name="Rapoport G."/>
            <person name="Rey M."/>
            <person name="Reynolds S."/>
            <person name="Rieger M."/>
            <person name="Rivolta C."/>
            <person name="Rocha E."/>
            <person name="Roche B."/>
            <person name="Rose M."/>
            <person name="Sadaie Y."/>
            <person name="Sato T."/>
            <person name="Scanlan E."/>
            <person name="Schleich S."/>
            <person name="Schroeter R."/>
            <person name="Scoffone F."/>
            <person name="Sekiguchi J."/>
            <person name="Sekowska A."/>
            <person name="Seror S.J."/>
            <person name="Serror P."/>
            <person name="Shin B.-S."/>
            <person name="Soldo B."/>
            <person name="Sorokin A."/>
            <person name="Tacconi E."/>
            <person name="Takagi T."/>
            <person name="Takahashi H."/>
            <person name="Takemaru K."/>
            <person name="Takeuchi M."/>
            <person name="Tamakoshi A."/>
            <person name="Tanaka T."/>
            <person name="Terpstra P."/>
            <person name="Tognoni A."/>
            <person name="Tosato V."/>
            <person name="Uchiyama S."/>
            <person name="Vandenbol M."/>
            <person name="Vannier F."/>
            <person name="Vassarotti A."/>
            <person name="Viari A."/>
            <person name="Wambutt R."/>
            <person name="Wedler E."/>
            <person name="Wedler H."/>
            <person name="Weitzenegger T."/>
            <person name="Winters P."/>
            <person name="Wipat A."/>
            <person name="Yamamoto H."/>
            <person name="Yamane K."/>
            <person name="Yasumoto K."/>
            <person name="Yata K."/>
            <person name="Yoshida K."/>
            <person name="Yoshikawa H.-F."/>
            <person name="Zumstein E."/>
            <person name="Yoshikawa H."/>
            <person name="Danchin A."/>
        </authorList>
    </citation>
    <scope>NUCLEOTIDE SEQUENCE [LARGE SCALE GENOMIC DNA]</scope>
    <source>
        <strain>168</strain>
    </source>
</reference>
<reference key="3">
    <citation type="journal article" date="2005" name="J. Bacteriol.">
        <title>Genetic composition of the Bacillus subtilis SOS system.</title>
        <authorList>
            <person name="Au N."/>
            <person name="Kuester-Schoeck E."/>
            <person name="Mandava V."/>
            <person name="Bothwell L.E."/>
            <person name="Canny S.P."/>
            <person name="Chachu K."/>
            <person name="Colavito S.A."/>
            <person name="Fuller S.N."/>
            <person name="Groban E.S."/>
            <person name="Hensley L.A."/>
            <person name="O'Brien T.C."/>
            <person name="Shah A."/>
            <person name="Tierney J.T."/>
            <person name="Tomm L.L."/>
            <person name="O'Gara T.M."/>
            <person name="Goranov A.I."/>
            <person name="Grossman A.D."/>
            <person name="Lovett C.M."/>
        </authorList>
    </citation>
    <scope>INDUCTION BY MITOMYCIN C AND UV</scope>
    <scope>PROBABLE OPERON STRUCTURE</scope>
    <source>
        <strain>168 / YB886 / BG214</strain>
    </source>
</reference>
<feature type="chain" id="PRO_0000388339" description="Uncharacterized metallophosphoesterase YhaO">
    <location>
        <begin position="1"/>
        <end position="408"/>
    </location>
</feature>
<feature type="binding site" evidence="1">
    <location>
        <position position="35"/>
    </location>
    <ligand>
        <name>a divalent metal cation</name>
        <dbReference type="ChEBI" id="CHEBI:60240"/>
        <label>1</label>
    </ligand>
</feature>
<feature type="binding site" evidence="1">
    <location>
        <position position="61"/>
    </location>
    <ligand>
        <name>a divalent metal cation</name>
        <dbReference type="ChEBI" id="CHEBI:60240"/>
        <label>1</label>
    </ligand>
</feature>
<feature type="binding site" evidence="1">
    <location>
        <position position="61"/>
    </location>
    <ligand>
        <name>a divalent metal cation</name>
        <dbReference type="ChEBI" id="CHEBI:60240"/>
        <label>2</label>
    </ligand>
</feature>
<feature type="binding site" evidence="1">
    <location>
        <position position="96"/>
    </location>
    <ligand>
        <name>a divalent metal cation</name>
        <dbReference type="ChEBI" id="CHEBI:60240"/>
        <label>2</label>
    </ligand>
</feature>
<dbReference type="EMBL" id="Y14078">
    <property type="protein sequence ID" value="CAA74422.1"/>
    <property type="molecule type" value="Genomic_DNA"/>
</dbReference>
<dbReference type="EMBL" id="AL009126">
    <property type="protein sequence ID" value="CAB12831.1"/>
    <property type="molecule type" value="Genomic_DNA"/>
</dbReference>
<dbReference type="PIR" id="A69819">
    <property type="entry name" value="A69819"/>
</dbReference>
<dbReference type="RefSeq" id="NP_388872.1">
    <property type="nucleotide sequence ID" value="NC_000964.3"/>
</dbReference>
<dbReference type="RefSeq" id="WP_003233258.1">
    <property type="nucleotide sequence ID" value="NZ_OZ025638.1"/>
</dbReference>
<dbReference type="SMR" id="O07522"/>
<dbReference type="FunCoup" id="O07522">
    <property type="interactions" value="182"/>
</dbReference>
<dbReference type="IntAct" id="O07522">
    <property type="interactions" value="1"/>
</dbReference>
<dbReference type="STRING" id="224308.BSU09910"/>
<dbReference type="PaxDb" id="224308-BSU09910"/>
<dbReference type="EnsemblBacteria" id="CAB12831">
    <property type="protein sequence ID" value="CAB12831"/>
    <property type="gene ID" value="BSU_09910"/>
</dbReference>
<dbReference type="GeneID" id="936282"/>
<dbReference type="KEGG" id="bsu:BSU09910"/>
<dbReference type="PATRIC" id="fig|224308.179.peg.1064"/>
<dbReference type="eggNOG" id="COG0420">
    <property type="taxonomic scope" value="Bacteria"/>
</dbReference>
<dbReference type="InParanoid" id="O07522"/>
<dbReference type="OrthoDB" id="9773856at2"/>
<dbReference type="PhylomeDB" id="O07522"/>
<dbReference type="BioCyc" id="BSUB:BSU09910-MONOMER"/>
<dbReference type="Proteomes" id="UP000001570">
    <property type="component" value="Chromosome"/>
</dbReference>
<dbReference type="GO" id="GO:0003677">
    <property type="term" value="F:DNA binding"/>
    <property type="evidence" value="ECO:0000318"/>
    <property type="project" value="GO_Central"/>
</dbReference>
<dbReference type="GO" id="GO:0004529">
    <property type="term" value="F:DNA exonuclease activity"/>
    <property type="evidence" value="ECO:0000318"/>
    <property type="project" value="GO_Central"/>
</dbReference>
<dbReference type="GO" id="GO:0046872">
    <property type="term" value="F:metal ion binding"/>
    <property type="evidence" value="ECO:0007669"/>
    <property type="project" value="UniProtKB-KW"/>
</dbReference>
<dbReference type="GO" id="GO:0006281">
    <property type="term" value="P:DNA repair"/>
    <property type="evidence" value="ECO:0000318"/>
    <property type="project" value="GO_Central"/>
</dbReference>
<dbReference type="CDD" id="cd00840">
    <property type="entry name" value="MPP_Mre11_N"/>
    <property type="match status" value="1"/>
</dbReference>
<dbReference type="Gene3D" id="3.60.21.10">
    <property type="match status" value="1"/>
</dbReference>
<dbReference type="InterPro" id="IPR004843">
    <property type="entry name" value="Calcineurin-like_PHP_ApaH"/>
</dbReference>
<dbReference type="InterPro" id="IPR050535">
    <property type="entry name" value="DNA_Repair-Maintenance_Comp"/>
</dbReference>
<dbReference type="InterPro" id="IPR029052">
    <property type="entry name" value="Metallo-depent_PP-like"/>
</dbReference>
<dbReference type="InterPro" id="IPR041796">
    <property type="entry name" value="Mre11_N"/>
</dbReference>
<dbReference type="InterPro" id="IPR014576">
    <property type="entry name" value="Pesterase_YhaO"/>
</dbReference>
<dbReference type="PANTHER" id="PTHR30337">
    <property type="entry name" value="COMPONENT OF ATP-DEPENDENT DSDNA EXONUCLEASE"/>
    <property type="match status" value="1"/>
</dbReference>
<dbReference type="PANTHER" id="PTHR30337:SF7">
    <property type="entry name" value="PHOSPHOESTERASE"/>
    <property type="match status" value="1"/>
</dbReference>
<dbReference type="Pfam" id="PF00149">
    <property type="entry name" value="Metallophos"/>
    <property type="match status" value="1"/>
</dbReference>
<dbReference type="PIRSF" id="PIRSF033091">
    <property type="entry name" value="Pesterase_YhaO"/>
    <property type="match status" value="1"/>
</dbReference>
<dbReference type="SUPFAM" id="SSF56300">
    <property type="entry name" value="Metallo-dependent phosphatases"/>
    <property type="match status" value="1"/>
</dbReference>
<evidence type="ECO:0000250" key="1"/>
<evidence type="ECO:0000269" key="2">
    <source>
    </source>
</evidence>
<evidence type="ECO:0000305" key="3"/>
<accession>O07522</accession>
<accession>Q796V4</accession>
<sequence length="408" mass="46811">MLTDLTFIHAADLHLDSPFYGISHLPEPIFARIKESTFASVRHMIDAAVREHVDFILLAGDLFDEANRSLKAQLFLKKQFERLRECGISVYVIFGNHDHLGGEWTPIEWPENVHIFSSAVPEEKSFFKEGRRIASIYGFSYQARALMENQAARYRRSTDAPFHIGMLHGTLSGSEGHDPYCPFTHDDLVKSGMDYWALGHIHKRQVLSAEHPAVIYPGNTQARHIKETGDKGYYLVHVTNGDISYEFQRAHDVLWEKAAVDVTEAKNMTALFQMVEDTFSKLRKKGSPVCVRLVLQGTAPEWLLEAPKGTLDEFLEALQEQEAEEERFVWPLRLDDETENEANLTNLDPFFGGLFEDIDRSDLSDVLEGLERHPVYRRHADRFSQEEVKEIKEQAQIILKRQLKVLDT</sequence>
<organism>
    <name type="scientific">Bacillus subtilis (strain 168)</name>
    <dbReference type="NCBI Taxonomy" id="224308"/>
    <lineage>
        <taxon>Bacteria</taxon>
        <taxon>Bacillati</taxon>
        <taxon>Bacillota</taxon>
        <taxon>Bacilli</taxon>
        <taxon>Bacillales</taxon>
        <taxon>Bacillaceae</taxon>
        <taxon>Bacillus</taxon>
    </lineage>
</organism>
<protein>
    <recommendedName>
        <fullName>Uncharacterized metallophosphoesterase YhaO</fullName>
    </recommendedName>
</protein>
<proteinExistence type="evidence at transcript level"/>